<keyword id="KW-0030">Aminoacyl-tRNA synthetase</keyword>
<keyword id="KW-0067">ATP-binding</keyword>
<keyword id="KW-0963">Cytoplasm</keyword>
<keyword id="KW-0436">Ligase</keyword>
<keyword id="KW-0479">Metal-binding</keyword>
<keyword id="KW-0547">Nucleotide-binding</keyword>
<keyword id="KW-0648">Protein biosynthesis</keyword>
<keyword id="KW-0862">Zinc</keyword>
<proteinExistence type="inferred from homology"/>
<organism>
    <name type="scientific">Bacillus cereus (strain AH187)</name>
    <dbReference type="NCBI Taxonomy" id="405534"/>
    <lineage>
        <taxon>Bacteria</taxon>
        <taxon>Bacillati</taxon>
        <taxon>Bacillota</taxon>
        <taxon>Bacilli</taxon>
        <taxon>Bacillales</taxon>
        <taxon>Bacillaceae</taxon>
        <taxon>Bacillus</taxon>
        <taxon>Bacillus cereus group</taxon>
    </lineage>
</organism>
<dbReference type="EC" id="6.1.1.5" evidence="1"/>
<dbReference type="EMBL" id="CP001177">
    <property type="protein sequence ID" value="ACJ82513.1"/>
    <property type="molecule type" value="Genomic_DNA"/>
</dbReference>
<dbReference type="SMR" id="B7HLM9"/>
<dbReference type="KEGG" id="bcr:BCAH187_A3947"/>
<dbReference type="HOGENOM" id="CLU_001493_7_2_9"/>
<dbReference type="Proteomes" id="UP000002214">
    <property type="component" value="Chromosome"/>
</dbReference>
<dbReference type="GO" id="GO:0005829">
    <property type="term" value="C:cytosol"/>
    <property type="evidence" value="ECO:0007669"/>
    <property type="project" value="TreeGrafter"/>
</dbReference>
<dbReference type="GO" id="GO:0002161">
    <property type="term" value="F:aminoacyl-tRNA deacylase activity"/>
    <property type="evidence" value="ECO:0007669"/>
    <property type="project" value="InterPro"/>
</dbReference>
<dbReference type="GO" id="GO:0005524">
    <property type="term" value="F:ATP binding"/>
    <property type="evidence" value="ECO:0007669"/>
    <property type="project" value="UniProtKB-UniRule"/>
</dbReference>
<dbReference type="GO" id="GO:0004822">
    <property type="term" value="F:isoleucine-tRNA ligase activity"/>
    <property type="evidence" value="ECO:0007669"/>
    <property type="project" value="UniProtKB-UniRule"/>
</dbReference>
<dbReference type="GO" id="GO:0000049">
    <property type="term" value="F:tRNA binding"/>
    <property type="evidence" value="ECO:0007669"/>
    <property type="project" value="InterPro"/>
</dbReference>
<dbReference type="GO" id="GO:0008270">
    <property type="term" value="F:zinc ion binding"/>
    <property type="evidence" value="ECO:0007669"/>
    <property type="project" value="UniProtKB-UniRule"/>
</dbReference>
<dbReference type="GO" id="GO:0006428">
    <property type="term" value="P:isoleucyl-tRNA aminoacylation"/>
    <property type="evidence" value="ECO:0007669"/>
    <property type="project" value="UniProtKB-UniRule"/>
</dbReference>
<dbReference type="CDD" id="cd07960">
    <property type="entry name" value="Anticodon_Ia_Ile_BEm"/>
    <property type="match status" value="1"/>
</dbReference>
<dbReference type="CDD" id="cd00818">
    <property type="entry name" value="IleRS_core"/>
    <property type="match status" value="1"/>
</dbReference>
<dbReference type="FunFam" id="1.10.10.830:FF:000001">
    <property type="entry name" value="Isoleucine--tRNA ligase"/>
    <property type="match status" value="1"/>
</dbReference>
<dbReference type="FunFam" id="1.10.730.20:FF:000001">
    <property type="entry name" value="Isoleucine--tRNA ligase"/>
    <property type="match status" value="1"/>
</dbReference>
<dbReference type="FunFam" id="3.40.50.620:FF:000152">
    <property type="entry name" value="Isoleucine--tRNA ligase"/>
    <property type="match status" value="1"/>
</dbReference>
<dbReference type="FunFam" id="3.90.740.10:FF:000006">
    <property type="entry name" value="Isoleucine--tRNA ligase"/>
    <property type="match status" value="1"/>
</dbReference>
<dbReference type="Gene3D" id="1.10.730.20">
    <property type="match status" value="1"/>
</dbReference>
<dbReference type="Gene3D" id="3.40.50.620">
    <property type="entry name" value="HUPs"/>
    <property type="match status" value="2"/>
</dbReference>
<dbReference type="Gene3D" id="1.10.10.830">
    <property type="entry name" value="Ile-tRNA synthetase CP2 domain-like"/>
    <property type="match status" value="1"/>
</dbReference>
<dbReference type="Gene3D" id="3.90.740.10">
    <property type="entry name" value="Valyl/Leucyl/Isoleucyl-tRNA synthetase, editing domain"/>
    <property type="match status" value="1"/>
</dbReference>
<dbReference type="HAMAP" id="MF_02002">
    <property type="entry name" value="Ile_tRNA_synth_type1"/>
    <property type="match status" value="1"/>
</dbReference>
<dbReference type="InterPro" id="IPR001412">
    <property type="entry name" value="aa-tRNA-synth_I_CS"/>
</dbReference>
<dbReference type="InterPro" id="IPR002300">
    <property type="entry name" value="aa-tRNA-synth_Ia"/>
</dbReference>
<dbReference type="InterPro" id="IPR033708">
    <property type="entry name" value="Anticodon_Ile_BEm"/>
</dbReference>
<dbReference type="InterPro" id="IPR002301">
    <property type="entry name" value="Ile-tRNA-ligase"/>
</dbReference>
<dbReference type="InterPro" id="IPR023585">
    <property type="entry name" value="Ile-tRNA-ligase_type1"/>
</dbReference>
<dbReference type="InterPro" id="IPR050081">
    <property type="entry name" value="Ile-tRNA_ligase"/>
</dbReference>
<dbReference type="InterPro" id="IPR013155">
    <property type="entry name" value="M/V/L/I-tRNA-synth_anticd-bd"/>
</dbReference>
<dbReference type="InterPro" id="IPR014729">
    <property type="entry name" value="Rossmann-like_a/b/a_fold"/>
</dbReference>
<dbReference type="InterPro" id="IPR009080">
    <property type="entry name" value="tRNAsynth_Ia_anticodon-bd"/>
</dbReference>
<dbReference type="InterPro" id="IPR009008">
    <property type="entry name" value="Val/Leu/Ile-tRNA-synth_edit"/>
</dbReference>
<dbReference type="InterPro" id="IPR010663">
    <property type="entry name" value="Znf_FPG/IleRS"/>
</dbReference>
<dbReference type="NCBIfam" id="TIGR00392">
    <property type="entry name" value="ileS"/>
    <property type="match status" value="1"/>
</dbReference>
<dbReference type="PANTHER" id="PTHR42765:SF1">
    <property type="entry name" value="ISOLEUCINE--TRNA LIGASE, MITOCHONDRIAL"/>
    <property type="match status" value="1"/>
</dbReference>
<dbReference type="PANTHER" id="PTHR42765">
    <property type="entry name" value="SOLEUCYL-TRNA SYNTHETASE"/>
    <property type="match status" value="1"/>
</dbReference>
<dbReference type="Pfam" id="PF08264">
    <property type="entry name" value="Anticodon_1"/>
    <property type="match status" value="1"/>
</dbReference>
<dbReference type="Pfam" id="PF00133">
    <property type="entry name" value="tRNA-synt_1"/>
    <property type="match status" value="1"/>
</dbReference>
<dbReference type="Pfam" id="PF06827">
    <property type="entry name" value="zf-FPG_IleRS"/>
    <property type="match status" value="1"/>
</dbReference>
<dbReference type="PRINTS" id="PR00984">
    <property type="entry name" value="TRNASYNTHILE"/>
</dbReference>
<dbReference type="SUPFAM" id="SSF47323">
    <property type="entry name" value="Anticodon-binding domain of a subclass of class I aminoacyl-tRNA synthetases"/>
    <property type="match status" value="1"/>
</dbReference>
<dbReference type="SUPFAM" id="SSF52374">
    <property type="entry name" value="Nucleotidylyl transferase"/>
    <property type="match status" value="1"/>
</dbReference>
<dbReference type="SUPFAM" id="SSF50677">
    <property type="entry name" value="ValRS/IleRS/LeuRS editing domain"/>
    <property type="match status" value="1"/>
</dbReference>
<dbReference type="PROSITE" id="PS00178">
    <property type="entry name" value="AA_TRNA_LIGASE_I"/>
    <property type="match status" value="1"/>
</dbReference>
<protein>
    <recommendedName>
        <fullName evidence="1">Isoleucine--tRNA ligase</fullName>
        <ecNumber evidence="1">6.1.1.5</ecNumber>
    </recommendedName>
    <alternativeName>
        <fullName evidence="1">Isoleucyl-tRNA synthetase</fullName>
        <shortName evidence="1">IleRS</shortName>
    </alternativeName>
</protein>
<gene>
    <name evidence="1" type="primary">ileS</name>
    <name type="ordered locus">BCAH187_A3947</name>
</gene>
<sequence>MEYKNTLLMPKTEFPMRGNLPKREPAMQEKWAEMNIYEKVQEHTKGRPLFVLHDGPPYANGDIHMGHALNKVLKDFIVRYKSMTGFCAPYVPGWDTHGLPIEQALTNKGVKRKEMTVAEFRKLCAEYAYEQVERQREQFKRLGVRADWDNPYITLEPAYEAQQIKVFGDMAKKGYIYKGQKPVYWSPTSESALAEAEIEYQDKKSASIYVAFPVKDGKNVLEGDEKYIIWTTTPWTLPANLGISVHPELEYAIVKVNGEKYIIASELFETVAKTLEWENAEVVKTVKGSELEYTVAKHPFYDRDSLVMLGDHVTTDAGTGCVHTAPGHGEDDFIVGKKYGLEVLCPVDDKGVLTEEAPGFEGLFYDKANKPITEKLEEVGALLKLTFITHSYPHDWRTKKPIIFRATAQWFASIEAFRKELLEAVAETKWVPAWGETRLHNMVRDRGDWCISRQRAWGVPIPVFYAENGDPIITDETINHVADLFREHGSNVWFEREAKDLLPEGFTHSGSPNGEFRKETDIMDVWFDSGSSHQAVLEERDDLQRPADLYLEGSDQYRGWFNSSLSTAVAVTGKAPYKGVLSHGFVLDGEGRKMSKSIGNIVVPKKIMDQLGGDILRLWVSSVDYQSDVRISDDILKQVAEVYRKIRNTFRFLLGNLDDFKPSENTVAVAELREVDRYMLVKLNDLITKVKEAYETYDFAAVYHAIHNFCTIDLSSFYLDFAKDILYIEGANHEDRRAIQTVLYDVLVALTKLVTPILPHTADEVWPYIPGVTEESVQLTDMPEAVQLDGAEALKTKWDAFMTLRDDVLKALEVARNEKVIGKSLNASITLYPTAEMKAMLESINEDLKQLFIVSEYKLGGMMEEAPADAPKYEHTAVVVVQATGETCERCWVVSETIGKDAEHETLCERCATVVKENYVK</sequence>
<name>SYI_BACC7</name>
<evidence type="ECO:0000255" key="1">
    <source>
        <dbReference type="HAMAP-Rule" id="MF_02002"/>
    </source>
</evidence>
<reference key="1">
    <citation type="submission" date="2008-10" db="EMBL/GenBank/DDBJ databases">
        <title>Genome sequence of Bacillus cereus AH187.</title>
        <authorList>
            <person name="Dodson R.J."/>
            <person name="Durkin A.S."/>
            <person name="Rosovitz M.J."/>
            <person name="Rasko D.A."/>
            <person name="Kolsto A.B."/>
            <person name="Okstad O.A."/>
            <person name="Ravel J."/>
            <person name="Sutton G."/>
        </authorList>
    </citation>
    <scope>NUCLEOTIDE SEQUENCE [LARGE SCALE GENOMIC DNA]</scope>
    <source>
        <strain>AH187</strain>
    </source>
</reference>
<accession>B7HLM9</accession>
<feature type="chain" id="PRO_1000189127" description="Isoleucine--tRNA ligase">
    <location>
        <begin position="1"/>
        <end position="921"/>
    </location>
</feature>
<feature type="short sequence motif" description="'HIGH' region">
    <location>
        <begin position="57"/>
        <end position="67"/>
    </location>
</feature>
<feature type="short sequence motif" description="'KMSKS' region">
    <location>
        <begin position="593"/>
        <end position="597"/>
    </location>
</feature>
<feature type="binding site" evidence="1">
    <location>
        <position position="552"/>
    </location>
    <ligand>
        <name>L-isoleucyl-5'-AMP</name>
        <dbReference type="ChEBI" id="CHEBI:178002"/>
    </ligand>
</feature>
<feature type="binding site" evidence="1">
    <location>
        <position position="596"/>
    </location>
    <ligand>
        <name>ATP</name>
        <dbReference type="ChEBI" id="CHEBI:30616"/>
    </ligand>
</feature>
<feature type="binding site" evidence="1">
    <location>
        <position position="888"/>
    </location>
    <ligand>
        <name>Zn(2+)</name>
        <dbReference type="ChEBI" id="CHEBI:29105"/>
    </ligand>
</feature>
<feature type="binding site" evidence="1">
    <location>
        <position position="891"/>
    </location>
    <ligand>
        <name>Zn(2+)</name>
        <dbReference type="ChEBI" id="CHEBI:29105"/>
    </ligand>
</feature>
<feature type="binding site" evidence="1">
    <location>
        <position position="908"/>
    </location>
    <ligand>
        <name>Zn(2+)</name>
        <dbReference type="ChEBI" id="CHEBI:29105"/>
    </ligand>
</feature>
<feature type="binding site" evidence="1">
    <location>
        <position position="911"/>
    </location>
    <ligand>
        <name>Zn(2+)</name>
        <dbReference type="ChEBI" id="CHEBI:29105"/>
    </ligand>
</feature>
<comment type="function">
    <text evidence="1">Catalyzes the attachment of isoleucine to tRNA(Ile). As IleRS can inadvertently accommodate and process structurally similar amino acids such as valine, to avoid such errors it has two additional distinct tRNA(Ile)-dependent editing activities. One activity is designated as 'pretransfer' editing and involves the hydrolysis of activated Val-AMP. The other activity is designated 'posttransfer' editing and involves deacylation of mischarged Val-tRNA(Ile).</text>
</comment>
<comment type="catalytic activity">
    <reaction evidence="1">
        <text>tRNA(Ile) + L-isoleucine + ATP = L-isoleucyl-tRNA(Ile) + AMP + diphosphate</text>
        <dbReference type="Rhea" id="RHEA:11060"/>
        <dbReference type="Rhea" id="RHEA-COMP:9666"/>
        <dbReference type="Rhea" id="RHEA-COMP:9695"/>
        <dbReference type="ChEBI" id="CHEBI:30616"/>
        <dbReference type="ChEBI" id="CHEBI:33019"/>
        <dbReference type="ChEBI" id="CHEBI:58045"/>
        <dbReference type="ChEBI" id="CHEBI:78442"/>
        <dbReference type="ChEBI" id="CHEBI:78528"/>
        <dbReference type="ChEBI" id="CHEBI:456215"/>
        <dbReference type="EC" id="6.1.1.5"/>
    </reaction>
</comment>
<comment type="cofactor">
    <cofactor evidence="1">
        <name>Zn(2+)</name>
        <dbReference type="ChEBI" id="CHEBI:29105"/>
    </cofactor>
    <text evidence="1">Binds 1 zinc ion per subunit.</text>
</comment>
<comment type="subunit">
    <text evidence="1">Monomer.</text>
</comment>
<comment type="subcellular location">
    <subcellularLocation>
        <location evidence="1">Cytoplasm</location>
    </subcellularLocation>
</comment>
<comment type="domain">
    <text evidence="1">IleRS has two distinct active sites: one for aminoacylation and one for editing. The misactivated valine is translocated from the active site to the editing site, which sterically excludes the correctly activated isoleucine. The single editing site contains two valyl binding pockets, one specific for each substrate (Val-AMP or Val-tRNA(Ile)).</text>
</comment>
<comment type="similarity">
    <text evidence="1">Belongs to the class-I aminoacyl-tRNA synthetase family. IleS type 1 subfamily.</text>
</comment>